<comment type="function">
    <text evidence="1">Pyrophosphatase that catalyzes the hydrolysis of nucleoside triphosphates to their monophosphate derivatives, with a high preference for the non-canonical purine nucleotides XTP (xanthosine triphosphate), dITP (deoxyinosine triphosphate) and ITP. Seems to function as a house-cleaning enzyme that removes non-canonical purine nucleotides from the nucleotide pool, thus preventing their incorporation into DNA/RNA and avoiding chromosomal lesions.</text>
</comment>
<comment type="catalytic activity">
    <reaction evidence="1">
        <text>XTP + H2O = XMP + diphosphate + H(+)</text>
        <dbReference type="Rhea" id="RHEA:28610"/>
        <dbReference type="ChEBI" id="CHEBI:15377"/>
        <dbReference type="ChEBI" id="CHEBI:15378"/>
        <dbReference type="ChEBI" id="CHEBI:33019"/>
        <dbReference type="ChEBI" id="CHEBI:57464"/>
        <dbReference type="ChEBI" id="CHEBI:61314"/>
        <dbReference type="EC" id="3.6.1.66"/>
    </reaction>
</comment>
<comment type="catalytic activity">
    <reaction evidence="1">
        <text>dITP + H2O = dIMP + diphosphate + H(+)</text>
        <dbReference type="Rhea" id="RHEA:28342"/>
        <dbReference type="ChEBI" id="CHEBI:15377"/>
        <dbReference type="ChEBI" id="CHEBI:15378"/>
        <dbReference type="ChEBI" id="CHEBI:33019"/>
        <dbReference type="ChEBI" id="CHEBI:61194"/>
        <dbReference type="ChEBI" id="CHEBI:61382"/>
        <dbReference type="EC" id="3.6.1.66"/>
    </reaction>
</comment>
<comment type="catalytic activity">
    <reaction evidence="1">
        <text>ITP + H2O = IMP + diphosphate + H(+)</text>
        <dbReference type="Rhea" id="RHEA:29399"/>
        <dbReference type="ChEBI" id="CHEBI:15377"/>
        <dbReference type="ChEBI" id="CHEBI:15378"/>
        <dbReference type="ChEBI" id="CHEBI:33019"/>
        <dbReference type="ChEBI" id="CHEBI:58053"/>
        <dbReference type="ChEBI" id="CHEBI:61402"/>
        <dbReference type="EC" id="3.6.1.66"/>
    </reaction>
</comment>
<comment type="cofactor">
    <cofactor evidence="1">
        <name>Mg(2+)</name>
        <dbReference type="ChEBI" id="CHEBI:18420"/>
    </cofactor>
    <text evidence="1">Binds 1 Mg(2+) ion per subunit.</text>
</comment>
<comment type="subunit">
    <text evidence="1">Homodimer.</text>
</comment>
<comment type="similarity">
    <text evidence="1">Belongs to the HAM1 NTPase family.</text>
</comment>
<accession>Q8XCU5</accession>
<keyword id="KW-0378">Hydrolase</keyword>
<keyword id="KW-0460">Magnesium</keyword>
<keyword id="KW-0479">Metal-binding</keyword>
<keyword id="KW-0546">Nucleotide metabolism</keyword>
<keyword id="KW-0547">Nucleotide-binding</keyword>
<keyword id="KW-1185">Reference proteome</keyword>
<evidence type="ECO:0000255" key="1">
    <source>
        <dbReference type="HAMAP-Rule" id="MF_01405"/>
    </source>
</evidence>
<dbReference type="EC" id="3.6.1.66" evidence="1"/>
<dbReference type="EMBL" id="AE005174">
    <property type="protein sequence ID" value="AAG58085.1"/>
    <property type="molecule type" value="Genomic_DNA"/>
</dbReference>
<dbReference type="EMBL" id="BA000007">
    <property type="protein sequence ID" value="BAB37253.1"/>
    <property type="molecule type" value="Genomic_DNA"/>
</dbReference>
<dbReference type="PIR" id="A85953">
    <property type="entry name" value="A85953"/>
</dbReference>
<dbReference type="PIR" id="F91107">
    <property type="entry name" value="F91107"/>
</dbReference>
<dbReference type="RefSeq" id="NP_311857.1">
    <property type="nucleotide sequence ID" value="NC_002695.1"/>
</dbReference>
<dbReference type="RefSeq" id="WP_001174762.1">
    <property type="nucleotide sequence ID" value="NZ_VOAI01000003.1"/>
</dbReference>
<dbReference type="SMR" id="Q8XCU5"/>
<dbReference type="STRING" id="155864.Z4299"/>
<dbReference type="GeneID" id="916347"/>
<dbReference type="KEGG" id="ece:Z4299"/>
<dbReference type="KEGG" id="ecs:ECs_3830"/>
<dbReference type="PATRIC" id="fig|386585.9.peg.3996"/>
<dbReference type="eggNOG" id="COG0127">
    <property type="taxonomic scope" value="Bacteria"/>
</dbReference>
<dbReference type="HOGENOM" id="CLU_082080_0_3_6"/>
<dbReference type="OMA" id="YDPIFQP"/>
<dbReference type="Proteomes" id="UP000000558">
    <property type="component" value="Chromosome"/>
</dbReference>
<dbReference type="Proteomes" id="UP000002519">
    <property type="component" value="Chromosome"/>
</dbReference>
<dbReference type="GO" id="GO:0005829">
    <property type="term" value="C:cytosol"/>
    <property type="evidence" value="ECO:0007669"/>
    <property type="project" value="TreeGrafter"/>
</dbReference>
<dbReference type="GO" id="GO:0035870">
    <property type="term" value="F:dITP diphosphatase activity"/>
    <property type="evidence" value="ECO:0007669"/>
    <property type="project" value="RHEA"/>
</dbReference>
<dbReference type="GO" id="GO:0036220">
    <property type="term" value="F:ITP diphosphatase activity"/>
    <property type="evidence" value="ECO:0007669"/>
    <property type="project" value="UniProtKB-EC"/>
</dbReference>
<dbReference type="GO" id="GO:0046872">
    <property type="term" value="F:metal ion binding"/>
    <property type="evidence" value="ECO:0007669"/>
    <property type="project" value="UniProtKB-KW"/>
</dbReference>
<dbReference type="GO" id="GO:0000166">
    <property type="term" value="F:nucleotide binding"/>
    <property type="evidence" value="ECO:0007669"/>
    <property type="project" value="UniProtKB-KW"/>
</dbReference>
<dbReference type="GO" id="GO:0017111">
    <property type="term" value="F:ribonucleoside triphosphate phosphatase activity"/>
    <property type="evidence" value="ECO:0007669"/>
    <property type="project" value="InterPro"/>
</dbReference>
<dbReference type="GO" id="GO:0036222">
    <property type="term" value="F:XTP diphosphatase activity"/>
    <property type="evidence" value="ECO:0007669"/>
    <property type="project" value="RHEA"/>
</dbReference>
<dbReference type="GO" id="GO:0009117">
    <property type="term" value="P:nucleotide metabolic process"/>
    <property type="evidence" value="ECO:0007669"/>
    <property type="project" value="UniProtKB-KW"/>
</dbReference>
<dbReference type="GO" id="GO:0009146">
    <property type="term" value="P:purine nucleoside triphosphate catabolic process"/>
    <property type="evidence" value="ECO:0007669"/>
    <property type="project" value="UniProtKB-UniRule"/>
</dbReference>
<dbReference type="CDD" id="cd00515">
    <property type="entry name" value="HAM1"/>
    <property type="match status" value="1"/>
</dbReference>
<dbReference type="FunFam" id="3.90.950.10:FF:000001">
    <property type="entry name" value="dITP/XTP pyrophosphatase"/>
    <property type="match status" value="1"/>
</dbReference>
<dbReference type="Gene3D" id="3.90.950.10">
    <property type="match status" value="1"/>
</dbReference>
<dbReference type="HAMAP" id="MF_01405">
    <property type="entry name" value="Non_canon_purine_NTPase"/>
    <property type="match status" value="1"/>
</dbReference>
<dbReference type="InterPro" id="IPR020922">
    <property type="entry name" value="dITP/XTP_pyrophosphatase"/>
</dbReference>
<dbReference type="InterPro" id="IPR029001">
    <property type="entry name" value="ITPase-like_fam"/>
</dbReference>
<dbReference type="InterPro" id="IPR002637">
    <property type="entry name" value="RdgB/HAM1"/>
</dbReference>
<dbReference type="NCBIfam" id="NF011397">
    <property type="entry name" value="PRK14822.1"/>
    <property type="match status" value="1"/>
</dbReference>
<dbReference type="NCBIfam" id="TIGR00042">
    <property type="entry name" value="RdgB/HAM1 family non-canonical purine NTP pyrophosphatase"/>
    <property type="match status" value="1"/>
</dbReference>
<dbReference type="PANTHER" id="PTHR11067:SF9">
    <property type="entry name" value="INOSINE TRIPHOSPHATE PYROPHOSPHATASE"/>
    <property type="match status" value="1"/>
</dbReference>
<dbReference type="PANTHER" id="PTHR11067">
    <property type="entry name" value="INOSINE TRIPHOSPHATE PYROPHOSPHATASE/HAM1 PROTEIN"/>
    <property type="match status" value="1"/>
</dbReference>
<dbReference type="Pfam" id="PF01725">
    <property type="entry name" value="Ham1p_like"/>
    <property type="match status" value="1"/>
</dbReference>
<dbReference type="SUPFAM" id="SSF52972">
    <property type="entry name" value="ITPase-like"/>
    <property type="match status" value="1"/>
</dbReference>
<reference key="1">
    <citation type="journal article" date="2001" name="Nature">
        <title>Genome sequence of enterohaemorrhagic Escherichia coli O157:H7.</title>
        <authorList>
            <person name="Perna N.T."/>
            <person name="Plunkett G. III"/>
            <person name="Burland V."/>
            <person name="Mau B."/>
            <person name="Glasner J.D."/>
            <person name="Rose D.J."/>
            <person name="Mayhew G.F."/>
            <person name="Evans P.S."/>
            <person name="Gregor J."/>
            <person name="Kirkpatrick H.A."/>
            <person name="Posfai G."/>
            <person name="Hackett J."/>
            <person name="Klink S."/>
            <person name="Boutin A."/>
            <person name="Shao Y."/>
            <person name="Miller L."/>
            <person name="Grotbeck E.J."/>
            <person name="Davis N.W."/>
            <person name="Lim A."/>
            <person name="Dimalanta E.T."/>
            <person name="Potamousis K."/>
            <person name="Apodaca J."/>
            <person name="Anantharaman T.S."/>
            <person name="Lin J."/>
            <person name="Yen G."/>
            <person name="Schwartz D.C."/>
            <person name="Welch R.A."/>
            <person name="Blattner F.R."/>
        </authorList>
    </citation>
    <scope>NUCLEOTIDE SEQUENCE [LARGE SCALE GENOMIC DNA]</scope>
    <source>
        <strain>O157:H7 / EDL933 / ATCC 700927 / EHEC</strain>
    </source>
</reference>
<reference key="2">
    <citation type="journal article" date="2001" name="DNA Res.">
        <title>Complete genome sequence of enterohemorrhagic Escherichia coli O157:H7 and genomic comparison with a laboratory strain K-12.</title>
        <authorList>
            <person name="Hayashi T."/>
            <person name="Makino K."/>
            <person name="Ohnishi M."/>
            <person name="Kurokawa K."/>
            <person name="Ishii K."/>
            <person name="Yokoyama K."/>
            <person name="Han C.-G."/>
            <person name="Ohtsubo E."/>
            <person name="Nakayama K."/>
            <person name="Murata T."/>
            <person name="Tanaka M."/>
            <person name="Tobe T."/>
            <person name="Iida T."/>
            <person name="Takami H."/>
            <person name="Honda T."/>
            <person name="Sasakawa C."/>
            <person name="Ogasawara N."/>
            <person name="Yasunaga T."/>
            <person name="Kuhara S."/>
            <person name="Shiba T."/>
            <person name="Hattori M."/>
            <person name="Shinagawa H."/>
        </authorList>
    </citation>
    <scope>NUCLEOTIDE SEQUENCE [LARGE SCALE GENOMIC DNA]</scope>
    <source>
        <strain>O157:H7 / Sakai / RIMD 0509952 / EHEC</strain>
    </source>
</reference>
<name>IXTPA_ECO57</name>
<feature type="chain" id="PRO_0000178166" description="dITP/XTP pyrophosphatase">
    <location>
        <begin position="1"/>
        <end position="197"/>
    </location>
</feature>
<feature type="active site" description="Proton acceptor" evidence="1">
    <location>
        <position position="69"/>
    </location>
</feature>
<feature type="binding site" evidence="1">
    <location>
        <begin position="8"/>
        <end position="13"/>
    </location>
    <ligand>
        <name>substrate</name>
    </ligand>
</feature>
<feature type="binding site" evidence="1">
    <location>
        <position position="40"/>
    </location>
    <ligand>
        <name>Mg(2+)</name>
        <dbReference type="ChEBI" id="CHEBI:18420"/>
    </ligand>
</feature>
<feature type="binding site" evidence="1">
    <location>
        <position position="69"/>
    </location>
    <ligand>
        <name>Mg(2+)</name>
        <dbReference type="ChEBI" id="CHEBI:18420"/>
    </ligand>
</feature>
<feature type="binding site" evidence="1">
    <location>
        <position position="70"/>
    </location>
    <ligand>
        <name>substrate</name>
    </ligand>
</feature>
<feature type="binding site" evidence="1">
    <location>
        <begin position="154"/>
        <end position="157"/>
    </location>
    <ligand>
        <name>substrate</name>
    </ligand>
</feature>
<feature type="binding site" evidence="1">
    <location>
        <position position="177"/>
    </location>
    <ligand>
        <name>substrate</name>
    </ligand>
</feature>
<feature type="binding site" evidence="1">
    <location>
        <begin position="182"/>
        <end position="183"/>
    </location>
    <ligand>
        <name>substrate</name>
    </ligand>
</feature>
<protein>
    <recommendedName>
        <fullName evidence="1">dITP/XTP pyrophosphatase</fullName>
        <ecNumber evidence="1">3.6.1.66</ecNumber>
    </recommendedName>
    <alternativeName>
        <fullName evidence="1">Non-canonical purine NTP pyrophosphatase</fullName>
    </alternativeName>
    <alternativeName>
        <fullName evidence="1">Non-standard purine NTP pyrophosphatase</fullName>
    </alternativeName>
    <alternativeName>
        <fullName evidence="1">Nucleoside-triphosphate diphosphatase</fullName>
    </alternativeName>
    <alternativeName>
        <fullName evidence="1">Nucleoside-triphosphate pyrophosphatase</fullName>
        <shortName evidence="1">NTPase</shortName>
    </alternativeName>
</protein>
<proteinExistence type="inferred from homology"/>
<organism>
    <name type="scientific">Escherichia coli O157:H7</name>
    <dbReference type="NCBI Taxonomy" id="83334"/>
    <lineage>
        <taxon>Bacteria</taxon>
        <taxon>Pseudomonadati</taxon>
        <taxon>Pseudomonadota</taxon>
        <taxon>Gammaproteobacteria</taxon>
        <taxon>Enterobacterales</taxon>
        <taxon>Enterobacteriaceae</taxon>
        <taxon>Escherichia</taxon>
    </lineage>
</organism>
<sequence length="197" mass="20993">MQKVVLATGNAGKVRELASLLSDFGLDIVAQTELGVDSAEETGLTFIENAILKARHAAKVTGLPAIADDSGLAVDVLGGAPGIYSARYSGEDATDQKNLQKLLETLKDVPDDQRQARFHCVLVYLRHAEDPTPLVCHGSWPGVITREPAGTGGFGYDPIFFVPSEGKTAAELTREEKSAISHRGQALKLLLDALRNG</sequence>
<gene>
    <name type="primary">rdgB</name>
    <name type="synonym">yggV</name>
    <name type="ordered locus">Z4299</name>
    <name type="ordered locus">ECs3830</name>
</gene>